<dbReference type="EC" id="4.2.1.11" evidence="1"/>
<dbReference type="EMBL" id="BA000016">
    <property type="protein sequence ID" value="BAB81005.1"/>
    <property type="molecule type" value="Genomic_DNA"/>
</dbReference>
<dbReference type="RefSeq" id="WP_011010374.1">
    <property type="nucleotide sequence ID" value="NC_003366.1"/>
</dbReference>
<dbReference type="SMR" id="Q8XKU4"/>
<dbReference type="STRING" id="195102.gene:10490562"/>
<dbReference type="KEGG" id="cpe:CPE1299"/>
<dbReference type="HOGENOM" id="CLU_031223_2_1_9"/>
<dbReference type="UniPathway" id="UPA00109">
    <property type="reaction ID" value="UER00187"/>
</dbReference>
<dbReference type="Proteomes" id="UP000000818">
    <property type="component" value="Chromosome"/>
</dbReference>
<dbReference type="GO" id="GO:0009986">
    <property type="term" value="C:cell surface"/>
    <property type="evidence" value="ECO:0007669"/>
    <property type="project" value="UniProtKB-SubCell"/>
</dbReference>
<dbReference type="GO" id="GO:0005576">
    <property type="term" value="C:extracellular region"/>
    <property type="evidence" value="ECO:0007669"/>
    <property type="project" value="UniProtKB-SubCell"/>
</dbReference>
<dbReference type="GO" id="GO:0000015">
    <property type="term" value="C:phosphopyruvate hydratase complex"/>
    <property type="evidence" value="ECO:0007669"/>
    <property type="project" value="InterPro"/>
</dbReference>
<dbReference type="GO" id="GO:0000287">
    <property type="term" value="F:magnesium ion binding"/>
    <property type="evidence" value="ECO:0007669"/>
    <property type="project" value="UniProtKB-UniRule"/>
</dbReference>
<dbReference type="GO" id="GO:0004634">
    <property type="term" value="F:phosphopyruvate hydratase activity"/>
    <property type="evidence" value="ECO:0007669"/>
    <property type="project" value="UniProtKB-UniRule"/>
</dbReference>
<dbReference type="GO" id="GO:0006096">
    <property type="term" value="P:glycolytic process"/>
    <property type="evidence" value="ECO:0007669"/>
    <property type="project" value="UniProtKB-UniRule"/>
</dbReference>
<dbReference type="CDD" id="cd03313">
    <property type="entry name" value="enolase"/>
    <property type="match status" value="1"/>
</dbReference>
<dbReference type="FunFam" id="3.20.20.120:FF:000001">
    <property type="entry name" value="Enolase"/>
    <property type="match status" value="1"/>
</dbReference>
<dbReference type="FunFam" id="3.30.390.10:FF:000001">
    <property type="entry name" value="Enolase"/>
    <property type="match status" value="1"/>
</dbReference>
<dbReference type="Gene3D" id="3.20.20.120">
    <property type="entry name" value="Enolase-like C-terminal domain"/>
    <property type="match status" value="1"/>
</dbReference>
<dbReference type="Gene3D" id="3.30.390.10">
    <property type="entry name" value="Enolase-like, N-terminal domain"/>
    <property type="match status" value="1"/>
</dbReference>
<dbReference type="HAMAP" id="MF_00318">
    <property type="entry name" value="Enolase"/>
    <property type="match status" value="1"/>
</dbReference>
<dbReference type="InterPro" id="IPR000941">
    <property type="entry name" value="Enolase"/>
</dbReference>
<dbReference type="InterPro" id="IPR036849">
    <property type="entry name" value="Enolase-like_C_sf"/>
</dbReference>
<dbReference type="InterPro" id="IPR029017">
    <property type="entry name" value="Enolase-like_N"/>
</dbReference>
<dbReference type="InterPro" id="IPR020810">
    <property type="entry name" value="Enolase_C"/>
</dbReference>
<dbReference type="InterPro" id="IPR020809">
    <property type="entry name" value="Enolase_CS"/>
</dbReference>
<dbReference type="InterPro" id="IPR020811">
    <property type="entry name" value="Enolase_N"/>
</dbReference>
<dbReference type="NCBIfam" id="TIGR01060">
    <property type="entry name" value="eno"/>
    <property type="match status" value="1"/>
</dbReference>
<dbReference type="PANTHER" id="PTHR11902">
    <property type="entry name" value="ENOLASE"/>
    <property type="match status" value="1"/>
</dbReference>
<dbReference type="PANTHER" id="PTHR11902:SF1">
    <property type="entry name" value="ENOLASE"/>
    <property type="match status" value="1"/>
</dbReference>
<dbReference type="Pfam" id="PF00113">
    <property type="entry name" value="Enolase_C"/>
    <property type="match status" value="1"/>
</dbReference>
<dbReference type="Pfam" id="PF03952">
    <property type="entry name" value="Enolase_N"/>
    <property type="match status" value="1"/>
</dbReference>
<dbReference type="PIRSF" id="PIRSF001400">
    <property type="entry name" value="Enolase"/>
    <property type="match status" value="1"/>
</dbReference>
<dbReference type="PRINTS" id="PR00148">
    <property type="entry name" value="ENOLASE"/>
</dbReference>
<dbReference type="SFLD" id="SFLDF00002">
    <property type="entry name" value="enolase"/>
    <property type="match status" value="1"/>
</dbReference>
<dbReference type="SFLD" id="SFLDG00178">
    <property type="entry name" value="enolase"/>
    <property type="match status" value="1"/>
</dbReference>
<dbReference type="SMART" id="SM01192">
    <property type="entry name" value="Enolase_C"/>
    <property type="match status" value="1"/>
</dbReference>
<dbReference type="SMART" id="SM01193">
    <property type="entry name" value="Enolase_N"/>
    <property type="match status" value="1"/>
</dbReference>
<dbReference type="SUPFAM" id="SSF51604">
    <property type="entry name" value="Enolase C-terminal domain-like"/>
    <property type="match status" value="1"/>
</dbReference>
<dbReference type="SUPFAM" id="SSF54826">
    <property type="entry name" value="Enolase N-terminal domain-like"/>
    <property type="match status" value="1"/>
</dbReference>
<dbReference type="PROSITE" id="PS00164">
    <property type="entry name" value="ENOLASE"/>
    <property type="match status" value="1"/>
</dbReference>
<proteinExistence type="inferred from homology"/>
<keyword id="KW-0963">Cytoplasm</keyword>
<keyword id="KW-0324">Glycolysis</keyword>
<keyword id="KW-0456">Lyase</keyword>
<keyword id="KW-0460">Magnesium</keyword>
<keyword id="KW-0479">Metal-binding</keyword>
<keyword id="KW-1185">Reference proteome</keyword>
<keyword id="KW-0964">Secreted</keyword>
<reference key="1">
    <citation type="journal article" date="2002" name="Proc. Natl. Acad. Sci. U.S.A.">
        <title>Complete genome sequence of Clostridium perfringens, an anaerobic flesh-eater.</title>
        <authorList>
            <person name="Shimizu T."/>
            <person name="Ohtani K."/>
            <person name="Hirakawa H."/>
            <person name="Ohshima K."/>
            <person name="Yamashita A."/>
            <person name="Shiba T."/>
            <person name="Ogasawara N."/>
            <person name="Hattori M."/>
            <person name="Kuhara S."/>
            <person name="Hayashi H."/>
        </authorList>
    </citation>
    <scope>NUCLEOTIDE SEQUENCE [LARGE SCALE GENOMIC DNA]</scope>
    <source>
        <strain>13 / Type A</strain>
    </source>
</reference>
<name>ENO_CLOPE</name>
<protein>
    <recommendedName>
        <fullName evidence="1">Enolase</fullName>
        <ecNumber evidence="1">4.2.1.11</ecNumber>
    </recommendedName>
    <alternativeName>
        <fullName evidence="1">2-phospho-D-glycerate hydro-lyase</fullName>
    </alternativeName>
    <alternativeName>
        <fullName evidence="1">2-phosphoglycerate dehydratase</fullName>
    </alternativeName>
</protein>
<accession>Q8XKU4</accession>
<comment type="function">
    <text evidence="1">Catalyzes the reversible conversion of 2-phosphoglycerate (2-PG) into phosphoenolpyruvate (PEP). It is essential for the degradation of carbohydrates via glycolysis.</text>
</comment>
<comment type="catalytic activity">
    <reaction evidence="1">
        <text>(2R)-2-phosphoglycerate = phosphoenolpyruvate + H2O</text>
        <dbReference type="Rhea" id="RHEA:10164"/>
        <dbReference type="ChEBI" id="CHEBI:15377"/>
        <dbReference type="ChEBI" id="CHEBI:58289"/>
        <dbReference type="ChEBI" id="CHEBI:58702"/>
        <dbReference type="EC" id="4.2.1.11"/>
    </reaction>
</comment>
<comment type="cofactor">
    <cofactor evidence="1">
        <name>Mg(2+)</name>
        <dbReference type="ChEBI" id="CHEBI:18420"/>
    </cofactor>
    <text evidence="1">Binds a second Mg(2+) ion via substrate during catalysis.</text>
</comment>
<comment type="pathway">
    <text evidence="1">Carbohydrate degradation; glycolysis; pyruvate from D-glyceraldehyde 3-phosphate: step 4/5.</text>
</comment>
<comment type="subcellular location">
    <subcellularLocation>
        <location evidence="1">Cytoplasm</location>
    </subcellularLocation>
    <subcellularLocation>
        <location evidence="1">Secreted</location>
    </subcellularLocation>
    <subcellularLocation>
        <location evidence="1">Cell surface</location>
    </subcellularLocation>
    <text evidence="1">Fractions of enolase are present in both the cytoplasm and on the cell surface.</text>
</comment>
<comment type="similarity">
    <text evidence="1">Belongs to the enolase family.</text>
</comment>
<organism>
    <name type="scientific">Clostridium perfringens (strain 13 / Type A)</name>
    <dbReference type="NCBI Taxonomy" id="195102"/>
    <lineage>
        <taxon>Bacteria</taxon>
        <taxon>Bacillati</taxon>
        <taxon>Bacillota</taxon>
        <taxon>Clostridia</taxon>
        <taxon>Eubacteriales</taxon>
        <taxon>Clostridiaceae</taxon>
        <taxon>Clostridium</taxon>
    </lineage>
</organism>
<evidence type="ECO:0000255" key="1">
    <source>
        <dbReference type="HAMAP-Rule" id="MF_00318"/>
    </source>
</evidence>
<gene>
    <name evidence="1" type="primary">eno</name>
    <name type="ordered locus">CPE1299</name>
</gene>
<feature type="chain" id="PRO_0000133872" description="Enolase">
    <location>
        <begin position="1"/>
        <end position="431"/>
    </location>
</feature>
<feature type="active site" description="Proton donor" evidence="1">
    <location>
        <position position="208"/>
    </location>
</feature>
<feature type="active site" description="Proton acceptor" evidence="1">
    <location>
        <position position="340"/>
    </location>
</feature>
<feature type="binding site" evidence="1">
    <location>
        <position position="166"/>
    </location>
    <ligand>
        <name>(2R)-2-phosphoglycerate</name>
        <dbReference type="ChEBI" id="CHEBI:58289"/>
    </ligand>
</feature>
<feature type="binding site" evidence="1">
    <location>
        <position position="245"/>
    </location>
    <ligand>
        <name>Mg(2+)</name>
        <dbReference type="ChEBI" id="CHEBI:18420"/>
    </ligand>
</feature>
<feature type="binding site" evidence="1">
    <location>
        <position position="288"/>
    </location>
    <ligand>
        <name>Mg(2+)</name>
        <dbReference type="ChEBI" id="CHEBI:18420"/>
    </ligand>
</feature>
<feature type="binding site" evidence="1">
    <location>
        <position position="315"/>
    </location>
    <ligand>
        <name>Mg(2+)</name>
        <dbReference type="ChEBI" id="CHEBI:18420"/>
    </ligand>
</feature>
<feature type="binding site" evidence="1">
    <location>
        <position position="340"/>
    </location>
    <ligand>
        <name>(2R)-2-phosphoglycerate</name>
        <dbReference type="ChEBI" id="CHEBI:58289"/>
    </ligand>
</feature>
<feature type="binding site" evidence="1">
    <location>
        <position position="369"/>
    </location>
    <ligand>
        <name>(2R)-2-phosphoglycerate</name>
        <dbReference type="ChEBI" id="CHEBI:58289"/>
    </ligand>
</feature>
<feature type="binding site" evidence="1">
    <location>
        <position position="370"/>
    </location>
    <ligand>
        <name>(2R)-2-phosphoglycerate</name>
        <dbReference type="ChEBI" id="CHEBI:58289"/>
    </ligand>
</feature>
<feature type="binding site" evidence="1">
    <location>
        <position position="391"/>
    </location>
    <ligand>
        <name>(2R)-2-phosphoglycerate</name>
        <dbReference type="ChEBI" id="CHEBI:58289"/>
    </ligand>
</feature>
<sequence length="431" mass="46949">MKQYIEIIDVVARQILDSRCFPTVEVEVYLEDGTVGRAAVPSGASTGIYEAVELRDGDKDKYLGKGVEKAVANVNDTIAEEIIGLNVLDQAYIDKTLIELDGTNNKGKLGANAILGVSLAVAQAAANYLGMPLYQYIGGVNAKVLPVPMMNIINGGSHADNSVDIQEFMIMPVGFDCFERAVRACAEVYHALKKTLNSKGYSTGVGDEGGFAPNLKSNAEAIEVILEAIEKAGYEPGKEFFIAIDAASSEYYKDGKYVLEHEGKTLTAAEMVDFFEDWVNKYPIISIEDGMAEEDWEGWKLMTERLGKKVQLVGDDLFVTNTERLKTGIEKGIANSILIKLNQIGTLTETLNAIEMANRAGYTAVVSHRSGETEDTTIADLVVAVNAGQIKTGAPARSERVAKYNQLIRINEELGEVAEYRGRNAFFNLSK</sequence>